<reference key="1">
    <citation type="submission" date="2007-10" db="EMBL/GenBank/DDBJ databases">
        <title>Complete sequence of Methanococcus maripaludis C6.</title>
        <authorList>
            <consortium name="US DOE Joint Genome Institute"/>
            <person name="Copeland A."/>
            <person name="Lucas S."/>
            <person name="Lapidus A."/>
            <person name="Barry K."/>
            <person name="Glavina del Rio T."/>
            <person name="Dalin E."/>
            <person name="Tice H."/>
            <person name="Pitluck S."/>
            <person name="Clum A."/>
            <person name="Schmutz J."/>
            <person name="Larimer F."/>
            <person name="Land M."/>
            <person name="Hauser L."/>
            <person name="Kyrpides N."/>
            <person name="Mikhailova N."/>
            <person name="Sieprawska-Lupa M."/>
            <person name="Whitman W.B."/>
            <person name="Richardson P."/>
        </authorList>
    </citation>
    <scope>NUCLEOTIDE SEQUENCE [LARGE SCALE GENOMIC DNA]</scope>
    <source>
        <strain>C6 / ATCC BAA-1332</strain>
    </source>
</reference>
<sequence>MDISIISDKNNPLLYRREIKFTVSFDAATPSIKDVKMKLVAVLNADKKVLVVDTLDQIFGKLEAEGYAKIYNDEKAMATIETKSVLEKNKIEEEAAEAEVAEE</sequence>
<feature type="chain" id="PRO_1000128919" description="Small ribosomal subunit protein eS24">
    <location>
        <begin position="1"/>
        <end position="103"/>
    </location>
</feature>
<accession>A9A6J0</accession>
<gene>
    <name evidence="1" type="primary">rps24e</name>
    <name type="ordered locus">MmarC6_0468</name>
</gene>
<dbReference type="EMBL" id="CP000867">
    <property type="protein sequence ID" value="ABX01286.1"/>
    <property type="molecule type" value="Genomic_DNA"/>
</dbReference>
<dbReference type="SMR" id="A9A6J0"/>
<dbReference type="STRING" id="444158.MmarC6_0468"/>
<dbReference type="KEGG" id="mmx:MmarC6_0468"/>
<dbReference type="eggNOG" id="arCOG04182">
    <property type="taxonomic scope" value="Archaea"/>
</dbReference>
<dbReference type="HOGENOM" id="CLU_107248_3_1_2"/>
<dbReference type="OrthoDB" id="27533at2157"/>
<dbReference type="PhylomeDB" id="A9A6J0"/>
<dbReference type="GO" id="GO:1990904">
    <property type="term" value="C:ribonucleoprotein complex"/>
    <property type="evidence" value="ECO:0007669"/>
    <property type="project" value="UniProtKB-KW"/>
</dbReference>
<dbReference type="GO" id="GO:0005840">
    <property type="term" value="C:ribosome"/>
    <property type="evidence" value="ECO:0007669"/>
    <property type="project" value="UniProtKB-KW"/>
</dbReference>
<dbReference type="GO" id="GO:0003735">
    <property type="term" value="F:structural constituent of ribosome"/>
    <property type="evidence" value="ECO:0007669"/>
    <property type="project" value="InterPro"/>
</dbReference>
<dbReference type="GO" id="GO:0006412">
    <property type="term" value="P:translation"/>
    <property type="evidence" value="ECO:0007669"/>
    <property type="project" value="UniProtKB-UniRule"/>
</dbReference>
<dbReference type="Gene3D" id="3.30.70.330">
    <property type="match status" value="1"/>
</dbReference>
<dbReference type="HAMAP" id="MF_00545">
    <property type="entry name" value="Ribosomal_eS24"/>
    <property type="match status" value="1"/>
</dbReference>
<dbReference type="InterPro" id="IPR012677">
    <property type="entry name" value="Nucleotide-bd_a/b_plait_sf"/>
</dbReference>
<dbReference type="InterPro" id="IPR001976">
    <property type="entry name" value="Ribosomal_eS24"/>
</dbReference>
<dbReference type="InterPro" id="IPR018098">
    <property type="entry name" value="Ribosomal_eS24_CS"/>
</dbReference>
<dbReference type="InterPro" id="IPR012678">
    <property type="entry name" value="Ribosomal_uL23/eL15/eS24_sf"/>
</dbReference>
<dbReference type="Pfam" id="PF01282">
    <property type="entry name" value="Ribosomal_S24e"/>
    <property type="match status" value="1"/>
</dbReference>
<dbReference type="SUPFAM" id="SSF54189">
    <property type="entry name" value="Ribosomal proteins S24e, L23 and L15e"/>
    <property type="match status" value="1"/>
</dbReference>
<dbReference type="PROSITE" id="PS00529">
    <property type="entry name" value="RIBOSOMAL_S24E"/>
    <property type="match status" value="1"/>
</dbReference>
<name>RS24_METM6</name>
<protein>
    <recommendedName>
        <fullName evidence="1">Small ribosomal subunit protein eS24</fullName>
    </recommendedName>
    <alternativeName>
        <fullName evidence="2">30S ribosomal protein S24e</fullName>
    </alternativeName>
</protein>
<proteinExistence type="inferred from homology"/>
<evidence type="ECO:0000255" key="1">
    <source>
        <dbReference type="HAMAP-Rule" id="MF_00545"/>
    </source>
</evidence>
<evidence type="ECO:0000305" key="2"/>
<organism>
    <name type="scientific">Methanococcus maripaludis (strain C6 / ATCC BAA-1332)</name>
    <dbReference type="NCBI Taxonomy" id="444158"/>
    <lineage>
        <taxon>Archaea</taxon>
        <taxon>Methanobacteriati</taxon>
        <taxon>Methanobacteriota</taxon>
        <taxon>Methanomada group</taxon>
        <taxon>Methanococci</taxon>
        <taxon>Methanococcales</taxon>
        <taxon>Methanococcaceae</taxon>
        <taxon>Methanococcus</taxon>
    </lineage>
</organism>
<keyword id="KW-0687">Ribonucleoprotein</keyword>
<keyword id="KW-0689">Ribosomal protein</keyword>
<comment type="similarity">
    <text evidence="1">Belongs to the eukaryotic ribosomal protein eS24 family.</text>
</comment>